<proteinExistence type="inferred from homology"/>
<accession>B7NJX7</accession>
<evidence type="ECO:0000255" key="1">
    <source>
        <dbReference type="HAMAP-Rule" id="MF_01845"/>
    </source>
</evidence>
<comment type="similarity">
    <text evidence="1">Belongs to the UPF0597 family.</text>
</comment>
<protein>
    <recommendedName>
        <fullName evidence="1">UPF0597 protein YhaM</fullName>
    </recommendedName>
</protein>
<sequence length="436" mass="45302">MFDSTLNPLWQRYILAVQEEVKPALGCTEPISLALAAAVAAAELEGPVERVEAWVSPNLMKNGLGVTVPGTGMVGLPIAAALGALGGNANAGLEVLKDATAQAIADAKALLAAGKVSVKIQEPCNEILFSRAKVWNGEKWACVTIVGGHTNIVHIETHDGVVFTQQACVAEGEQESPLTVLSRTTLAEILKFVNEVPFAAIRFILDSAKLNCALSQEGLSGKWGLHIGATLEKQCARGLLAKDLSSSIVIRTSAASDARMGGATLPAMSNSGSGNQGITATMPVVVVAEHFGADDERLARALMLSHLSAIYIHNQLPRLSALCAATTAAMGAAAGMAWLVDGRYETISMAISSMIGDVSGMICDGASNSCAMKVSTSASAAWKAVLMALDDTAVTGNEGIVAHDVEQSIANLCALASHSMQQTDRQIIEIMASKAR</sequence>
<name>YHAM_ECO7I</name>
<reference key="1">
    <citation type="journal article" date="2009" name="PLoS Genet.">
        <title>Organised genome dynamics in the Escherichia coli species results in highly diverse adaptive paths.</title>
        <authorList>
            <person name="Touchon M."/>
            <person name="Hoede C."/>
            <person name="Tenaillon O."/>
            <person name="Barbe V."/>
            <person name="Baeriswyl S."/>
            <person name="Bidet P."/>
            <person name="Bingen E."/>
            <person name="Bonacorsi S."/>
            <person name="Bouchier C."/>
            <person name="Bouvet O."/>
            <person name="Calteau A."/>
            <person name="Chiapello H."/>
            <person name="Clermont O."/>
            <person name="Cruveiller S."/>
            <person name="Danchin A."/>
            <person name="Diard M."/>
            <person name="Dossat C."/>
            <person name="Karoui M.E."/>
            <person name="Frapy E."/>
            <person name="Garry L."/>
            <person name="Ghigo J.M."/>
            <person name="Gilles A.M."/>
            <person name="Johnson J."/>
            <person name="Le Bouguenec C."/>
            <person name="Lescat M."/>
            <person name="Mangenot S."/>
            <person name="Martinez-Jehanne V."/>
            <person name="Matic I."/>
            <person name="Nassif X."/>
            <person name="Oztas S."/>
            <person name="Petit M.A."/>
            <person name="Pichon C."/>
            <person name="Rouy Z."/>
            <person name="Ruf C.S."/>
            <person name="Schneider D."/>
            <person name="Tourret J."/>
            <person name="Vacherie B."/>
            <person name="Vallenet D."/>
            <person name="Medigue C."/>
            <person name="Rocha E.P.C."/>
            <person name="Denamur E."/>
        </authorList>
    </citation>
    <scope>NUCLEOTIDE SEQUENCE [LARGE SCALE GENOMIC DNA]</scope>
    <source>
        <strain>IAI39 / ExPEC</strain>
    </source>
</reference>
<organism>
    <name type="scientific">Escherichia coli O7:K1 (strain IAI39 / ExPEC)</name>
    <dbReference type="NCBI Taxonomy" id="585057"/>
    <lineage>
        <taxon>Bacteria</taxon>
        <taxon>Pseudomonadati</taxon>
        <taxon>Pseudomonadota</taxon>
        <taxon>Gammaproteobacteria</taxon>
        <taxon>Enterobacterales</taxon>
        <taxon>Enterobacteriaceae</taxon>
        <taxon>Escherichia</taxon>
    </lineage>
</organism>
<dbReference type="EMBL" id="CU928164">
    <property type="protein sequence ID" value="CAR19727.1"/>
    <property type="molecule type" value="Genomic_DNA"/>
</dbReference>
<dbReference type="RefSeq" id="YP_002409514.1">
    <property type="nucleotide sequence ID" value="NC_011750.1"/>
</dbReference>
<dbReference type="SMR" id="B7NJX7"/>
<dbReference type="STRING" id="585057.ECIAI39_3611"/>
<dbReference type="KEGG" id="ect:ECIAI39_3611"/>
<dbReference type="PATRIC" id="fig|585057.6.peg.3742"/>
<dbReference type="HOGENOM" id="CLU_051840_0_0_6"/>
<dbReference type="Proteomes" id="UP000000749">
    <property type="component" value="Chromosome"/>
</dbReference>
<dbReference type="GO" id="GO:0080146">
    <property type="term" value="F:L-cysteine desulfhydrase activity"/>
    <property type="evidence" value="ECO:0007669"/>
    <property type="project" value="TreeGrafter"/>
</dbReference>
<dbReference type="GO" id="GO:0019450">
    <property type="term" value="P:L-cysteine catabolic process to pyruvate"/>
    <property type="evidence" value="ECO:0007669"/>
    <property type="project" value="TreeGrafter"/>
</dbReference>
<dbReference type="HAMAP" id="MF_01845">
    <property type="entry name" value="UPF0597"/>
    <property type="match status" value="1"/>
</dbReference>
<dbReference type="InterPro" id="IPR005130">
    <property type="entry name" value="Ser_deHydtase-like_asu"/>
</dbReference>
<dbReference type="InterPro" id="IPR021144">
    <property type="entry name" value="UPF0597"/>
</dbReference>
<dbReference type="PANTHER" id="PTHR30501">
    <property type="entry name" value="UPF0597 PROTEIN YHAM"/>
    <property type="match status" value="1"/>
</dbReference>
<dbReference type="PANTHER" id="PTHR30501:SF2">
    <property type="entry name" value="UPF0597 PROTEIN YHAM"/>
    <property type="match status" value="1"/>
</dbReference>
<dbReference type="Pfam" id="PF03313">
    <property type="entry name" value="SDH_alpha"/>
    <property type="match status" value="1"/>
</dbReference>
<dbReference type="PIRSF" id="PIRSF006054">
    <property type="entry name" value="UCP006054"/>
    <property type="match status" value="1"/>
</dbReference>
<feature type="chain" id="PRO_1000188454" description="UPF0597 protein YhaM">
    <location>
        <begin position="1"/>
        <end position="436"/>
    </location>
</feature>
<gene>
    <name evidence="1" type="primary">yhaM</name>
    <name type="ordered locus">ECIAI39_3611</name>
</gene>